<comment type="function">
    <text evidence="3 4">Transcriptional regulator which binds to DNA to regulate gene expression and promote seam cell development and differentiation during embryogenesis (PubMed:15659483, PubMed:19607822). Plays a role in maintaining the boundaries between the lateral rows of seam cells and the ventral and dorsal row of epidermal cells during embryonic development (PubMed:15659483). Negatively regulates the expression of the fusion effector protein eff-1 to prevent seam cell fusion with the dorsal and ventral epidermal cells during embryonic elongation (PubMed:15659483). Positively regulates seam cell self-renewal and expansion during the L2 larval stage to promote seam cell development (PubMed:19607822). This role does not seem to be via regulation of eff-1 expression (PubMed:19607822). Specifically, it is required for the asymmetric division of the V5.p seam cell during the L2 larval stage, and in turn the asymmetric nuclear distribution of pop-1 in V5.p daughter cells (PubMed:19607822).</text>
</comment>
<comment type="subcellular location">
    <subcellularLocation>
        <location evidence="1 3 4">Nucleus</location>
    </subcellularLocation>
    <subcellularLocation>
        <location evidence="4">Cytoplasm</location>
    </subcellularLocation>
</comment>
<comment type="tissue specificity">
    <text evidence="4">Expressed in seam cells.</text>
</comment>
<comment type="developmental stage">
    <text evidence="3 4">Expressed throughout embryonic development (PubMed:15659483). In embryos, highly expressed after the first cleavage until the early 3-fold stage in one bilateral row of epidermal hyp5, H0-H2, V1-V6 and T-cells (the seam cells) (PubMed:15659483). In later embryonic stages, expressed in anterior neurons and in the DA1 and DD1 motorneurons after hatching (PubMed:15659483). Expressed in seam cells at all larval and adult stages (PubMed:19607822). In dividing seam cells at the L2 larval stage, expressed equally in both daughters and expression in the anterior daughter ceases when it fuses with hyp7 (PubMed:19607822).</text>
</comment>
<comment type="disruption phenotype">
    <text evidence="3">Embryonic lethality due to embryos with disorganized epidermal cells, which cause morphological and elongation defects (PubMed:15659483). The seam cells in these embryos abnormally fuse to the syncytial hypodermis during embryonic elongation and ectopically express eff-1 (PubMed:15659483). RNAi-mediated knockdown results in embryonic lethality and embryos exhibit seam cell differentiation defects as indicated by a decrease in expression of early seam cell proteins including elt-5, nhr-73 and nhr-74 (PubMed:15659483).</text>
</comment>
<comment type="similarity">
    <text evidence="5">Belongs to the engrailed homeobox family.</text>
</comment>
<sequence>MILKFGIERILSSPYPCPSPTISTPATSPSSISPTFASPNGTPNIASSMYPAWVFSTRYSDRPSAGPRHRKSRKRESTGSSGSSEEEKRPRTAFTGDQLDRLKTEFRESRYLTEKRRQELAHELGLNESQIKIWFQNKRAKLKKSTSSVPRDRCSSVTPNPHNHPSIHGGYQLMAQLAKVQARAYMP</sequence>
<proteinExistence type="evidence at protein level"/>
<gene>
    <name evidence="6" type="primary">ceh-16</name>
    <name evidence="6" type="ORF">C13G5.1</name>
</gene>
<organism>
    <name type="scientific">Caenorhabditis elegans</name>
    <dbReference type="NCBI Taxonomy" id="6239"/>
    <lineage>
        <taxon>Eukaryota</taxon>
        <taxon>Metazoa</taxon>
        <taxon>Ecdysozoa</taxon>
        <taxon>Nematoda</taxon>
        <taxon>Chromadorea</taxon>
        <taxon>Rhabditida</taxon>
        <taxon>Rhabditina</taxon>
        <taxon>Rhabditomorpha</taxon>
        <taxon>Rhabditoidea</taxon>
        <taxon>Rhabditidae</taxon>
        <taxon>Peloderinae</taxon>
        <taxon>Caenorhabditis</taxon>
    </lineage>
</organism>
<reference key="1">
    <citation type="journal article" date="2005" name="Development">
        <title>ceh-16/engrailed patterns the embryonic epidermis of Caenorhabditis elegans.</title>
        <authorList>
            <person name="Cassata G."/>
            <person name="Shemer G."/>
            <person name="Morandi P."/>
            <person name="Donhauser R."/>
            <person name="Podbilewicz B."/>
            <person name="Baumeister R."/>
        </authorList>
    </citation>
    <scope>NUCLEOTIDE SEQUENCE [MRNA]</scope>
    <scope>FUNCTION</scope>
    <scope>SUBCELLULAR LOCATION</scope>
    <scope>DEVELOPMENTAL STAGE</scope>
    <scope>DISRUPTION PHENOTYPE</scope>
</reference>
<reference key="2">
    <citation type="journal article" date="1994" name="Nature">
        <title>2.2 Mb of contiguous nucleotide sequence from chromosome III of C. elegans.</title>
        <authorList>
            <person name="Wilson R."/>
            <person name="Ainscough R."/>
            <person name="Anderson K."/>
            <person name="Baynes C."/>
            <person name="Berks M."/>
            <person name="Bonfield J."/>
            <person name="Burton J."/>
            <person name="Connell M."/>
            <person name="Copsey T."/>
            <person name="Cooper J."/>
            <person name="Coulson A."/>
            <person name="Craxton M."/>
            <person name="Dear S."/>
            <person name="Du Z."/>
            <person name="Durbin R."/>
            <person name="Favello A."/>
            <person name="Fraser A."/>
            <person name="Fulton L."/>
            <person name="Gardner A."/>
            <person name="Green P."/>
            <person name="Hawkins T."/>
            <person name="Hillier L."/>
            <person name="Jier M."/>
            <person name="Johnston L."/>
            <person name="Jones M."/>
            <person name="Kershaw J."/>
            <person name="Kirsten J."/>
            <person name="Laisster N."/>
            <person name="Latreille P."/>
            <person name="Lightning J."/>
            <person name="Lloyd C."/>
            <person name="Mortimore B."/>
            <person name="O'Callaghan M."/>
            <person name="Parsons J."/>
            <person name="Percy C."/>
            <person name="Rifken L."/>
            <person name="Roopra A."/>
            <person name="Saunders D."/>
            <person name="Shownkeen R."/>
            <person name="Sims M."/>
            <person name="Smaldon N."/>
            <person name="Smith A."/>
            <person name="Smith M."/>
            <person name="Sonnhammer E."/>
            <person name="Staden R."/>
            <person name="Sulston J."/>
            <person name="Thierry-Mieg J."/>
            <person name="Thomas K."/>
            <person name="Vaudin M."/>
            <person name="Vaughan K."/>
            <person name="Waterston R."/>
            <person name="Watson A."/>
            <person name="Weinstock L."/>
            <person name="Wilkinson-Sproat J."/>
            <person name="Wohldman P."/>
        </authorList>
    </citation>
    <scope>NUCLEOTIDE SEQUENCE [LARGE SCALE GENOMIC DNA]</scope>
    <source>
        <strain>Bristol N2</strain>
    </source>
</reference>
<reference key="3">
    <citation type="journal article" date="1998" name="Science">
        <title>Genome sequence of the nematode C. elegans: a platform for investigating biology.</title>
        <authorList>
            <consortium name="The C. elegans sequencing consortium"/>
        </authorList>
    </citation>
    <scope>NUCLEOTIDE SEQUENCE [LARGE SCALE GENOMIC DNA]</scope>
    <source>
        <strain>Bristol N2</strain>
    </source>
</reference>
<reference key="4">
    <citation type="journal article" date="2009" name="Dev. Biol.">
        <title>The C. elegans engrailed homolog ceh-16 regulates the self-renewal expansion division of stem cell-like seam cells.</title>
        <authorList>
            <person name="Huang X."/>
            <person name="Tian E."/>
            <person name="Xu Y."/>
            <person name="Zhang H."/>
        </authorList>
    </citation>
    <scope>FUNCTION</scope>
    <scope>SUBCELLULAR LOCATION</scope>
    <scope>TISSUE SPECIFICITY</scope>
    <scope>DEVELOPMENTAL STAGE</scope>
    <scope>MUTAGENESIS OF THR-95</scope>
</reference>
<evidence type="ECO:0000255" key="1">
    <source>
        <dbReference type="PROSITE-ProRule" id="PRU00108"/>
    </source>
</evidence>
<evidence type="ECO:0000256" key="2">
    <source>
        <dbReference type="SAM" id="MobiDB-lite"/>
    </source>
</evidence>
<evidence type="ECO:0000269" key="3">
    <source>
    </source>
</evidence>
<evidence type="ECO:0000269" key="4">
    <source>
    </source>
</evidence>
<evidence type="ECO:0000305" key="5"/>
<evidence type="ECO:0000312" key="6">
    <source>
        <dbReference type="WormBase" id="C13G5.1"/>
    </source>
</evidence>
<name>HM16_CAEEL</name>
<dbReference type="EMBL" id="AY647457">
    <property type="protein sequence ID" value="AAT67384.1"/>
    <property type="molecule type" value="mRNA"/>
</dbReference>
<dbReference type="EMBL" id="BX284603">
    <property type="protein sequence ID" value="CCD63316.1"/>
    <property type="molecule type" value="Genomic_DNA"/>
</dbReference>
<dbReference type="PIR" id="S44752">
    <property type="entry name" value="S44752"/>
</dbReference>
<dbReference type="PIR" id="T15488">
    <property type="entry name" value="T15488"/>
</dbReference>
<dbReference type="RefSeq" id="NP_001379631.1">
    <property type="nucleotide sequence ID" value="NM_001392158.1"/>
</dbReference>
<dbReference type="RefSeq" id="NP_498898.2">
    <property type="nucleotide sequence ID" value="NM_066497.3"/>
</dbReference>
<dbReference type="SMR" id="P34326"/>
<dbReference type="BioGRID" id="56120">
    <property type="interactions" value="1"/>
</dbReference>
<dbReference type="FunCoup" id="P34326">
    <property type="interactions" value="80"/>
</dbReference>
<dbReference type="IntAct" id="P34326">
    <property type="interactions" value="1"/>
</dbReference>
<dbReference type="STRING" id="6239.C13G5.1.1"/>
<dbReference type="PaxDb" id="6239-C13G5.1.2"/>
<dbReference type="EnsemblMetazoa" id="C13G5.1.1">
    <property type="protein sequence ID" value="C13G5.1.1"/>
    <property type="gene ID" value="WBGene00000439"/>
</dbReference>
<dbReference type="EnsemblMetazoa" id="C13G5.1.2">
    <property type="protein sequence ID" value="C13G5.1.2"/>
    <property type="gene ID" value="WBGene00000439"/>
</dbReference>
<dbReference type="GeneID" id="191618"/>
<dbReference type="UCSC" id="C13G5.1">
    <property type="organism name" value="c. elegans"/>
</dbReference>
<dbReference type="AGR" id="WB:WBGene00000439"/>
<dbReference type="WormBase" id="C13G5.1">
    <property type="protein sequence ID" value="CE37477"/>
    <property type="gene ID" value="WBGene00000439"/>
    <property type="gene designation" value="ceh-16"/>
</dbReference>
<dbReference type="eggNOG" id="KOG0493">
    <property type="taxonomic scope" value="Eukaryota"/>
</dbReference>
<dbReference type="GeneTree" id="ENSGT00940000167868"/>
<dbReference type="HOGENOM" id="CLU_051739_3_1_1"/>
<dbReference type="InParanoid" id="P34326"/>
<dbReference type="OMA" id="QFQMMAQ"/>
<dbReference type="OrthoDB" id="6159439at2759"/>
<dbReference type="PhylomeDB" id="P34326"/>
<dbReference type="SignaLink" id="P34326"/>
<dbReference type="PRO" id="PR:P34326"/>
<dbReference type="Proteomes" id="UP000001940">
    <property type="component" value="Chromosome III"/>
</dbReference>
<dbReference type="Bgee" id="WBGene00000439">
    <property type="expression patterns" value="Expressed in embryo and 3 other cell types or tissues"/>
</dbReference>
<dbReference type="GO" id="GO:0005737">
    <property type="term" value="C:cytoplasm"/>
    <property type="evidence" value="ECO:0007669"/>
    <property type="project" value="UniProtKB-SubCell"/>
</dbReference>
<dbReference type="GO" id="GO:0005634">
    <property type="term" value="C:nucleus"/>
    <property type="evidence" value="ECO:0000314"/>
    <property type="project" value="WormBase"/>
</dbReference>
<dbReference type="GO" id="GO:0000981">
    <property type="term" value="F:DNA-binding transcription factor activity, RNA polymerase II-specific"/>
    <property type="evidence" value="ECO:0000318"/>
    <property type="project" value="GO_Central"/>
</dbReference>
<dbReference type="GO" id="GO:0000978">
    <property type="term" value="F:RNA polymerase II cis-regulatory region sequence-specific DNA binding"/>
    <property type="evidence" value="ECO:0000318"/>
    <property type="project" value="GO_Central"/>
</dbReference>
<dbReference type="GO" id="GO:0043565">
    <property type="term" value="F:sequence-specific DNA binding"/>
    <property type="evidence" value="ECO:0000314"/>
    <property type="project" value="WormBase"/>
</dbReference>
<dbReference type="GO" id="GO:0010172">
    <property type="term" value="P:embryonic body morphogenesis"/>
    <property type="evidence" value="ECO:0000315"/>
    <property type="project" value="WormBase"/>
</dbReference>
<dbReference type="GO" id="GO:0009957">
    <property type="term" value="P:epidermal cell fate specification"/>
    <property type="evidence" value="ECO:0000315"/>
    <property type="project" value="WormBase"/>
</dbReference>
<dbReference type="GO" id="GO:0048859">
    <property type="term" value="P:formation of anatomical boundary"/>
    <property type="evidence" value="ECO:0000315"/>
    <property type="project" value="WormBase"/>
</dbReference>
<dbReference type="GO" id="GO:0000122">
    <property type="term" value="P:negative regulation of transcription by RNA polymerase II"/>
    <property type="evidence" value="ECO:0000315"/>
    <property type="project" value="WormBase"/>
</dbReference>
<dbReference type="GO" id="GO:0045944">
    <property type="term" value="P:positive regulation of transcription by RNA polymerase II"/>
    <property type="evidence" value="ECO:0000315"/>
    <property type="project" value="WormBase"/>
</dbReference>
<dbReference type="GO" id="GO:0006357">
    <property type="term" value="P:regulation of transcription by RNA polymerase II"/>
    <property type="evidence" value="ECO:0000318"/>
    <property type="project" value="GO_Central"/>
</dbReference>
<dbReference type="CDD" id="cd00086">
    <property type="entry name" value="homeodomain"/>
    <property type="match status" value="1"/>
</dbReference>
<dbReference type="FunFam" id="1.10.10.60:FF:000189">
    <property type="entry name" value="Homeobox protein engrailed-like"/>
    <property type="match status" value="1"/>
</dbReference>
<dbReference type="Gene3D" id="1.10.10.60">
    <property type="entry name" value="Homeodomain-like"/>
    <property type="match status" value="1"/>
</dbReference>
<dbReference type="InterPro" id="IPR050720">
    <property type="entry name" value="Engrailed_Homeobox_TFs"/>
</dbReference>
<dbReference type="InterPro" id="IPR001356">
    <property type="entry name" value="HD"/>
</dbReference>
<dbReference type="InterPro" id="IPR020479">
    <property type="entry name" value="HD_metazoa"/>
</dbReference>
<dbReference type="InterPro" id="IPR017970">
    <property type="entry name" value="Homeobox_CS"/>
</dbReference>
<dbReference type="InterPro" id="IPR009057">
    <property type="entry name" value="Homeodomain-like_sf"/>
</dbReference>
<dbReference type="InterPro" id="IPR000047">
    <property type="entry name" value="HTH_motif"/>
</dbReference>
<dbReference type="PANTHER" id="PTHR24341">
    <property type="entry name" value="HOMEOBOX PROTEIN ENGRAILED"/>
    <property type="match status" value="1"/>
</dbReference>
<dbReference type="PANTHER" id="PTHR24341:SF6">
    <property type="entry name" value="HOMEOBOX PROTEIN INVECTED"/>
    <property type="match status" value="1"/>
</dbReference>
<dbReference type="Pfam" id="PF00046">
    <property type="entry name" value="Homeodomain"/>
    <property type="match status" value="1"/>
</dbReference>
<dbReference type="PRINTS" id="PR00024">
    <property type="entry name" value="HOMEOBOX"/>
</dbReference>
<dbReference type="PRINTS" id="PR00031">
    <property type="entry name" value="HTHREPRESSR"/>
</dbReference>
<dbReference type="SMART" id="SM00389">
    <property type="entry name" value="HOX"/>
    <property type="match status" value="1"/>
</dbReference>
<dbReference type="SUPFAM" id="SSF46689">
    <property type="entry name" value="Homeodomain-like"/>
    <property type="match status" value="1"/>
</dbReference>
<dbReference type="PROSITE" id="PS00027">
    <property type="entry name" value="HOMEOBOX_1"/>
    <property type="match status" value="1"/>
</dbReference>
<dbReference type="PROSITE" id="PS50071">
    <property type="entry name" value="HOMEOBOX_2"/>
    <property type="match status" value="1"/>
</dbReference>
<protein>
    <recommendedName>
        <fullName>Homeobox protein engrailed-like ceh-16</fullName>
    </recommendedName>
</protein>
<keyword id="KW-0963">Cytoplasm</keyword>
<keyword id="KW-0217">Developmental protein</keyword>
<keyword id="KW-0238">DNA-binding</keyword>
<keyword id="KW-0371">Homeobox</keyword>
<keyword id="KW-0539">Nucleus</keyword>
<keyword id="KW-1185">Reference proteome</keyword>
<keyword id="KW-0804">Transcription</keyword>
<keyword id="KW-0805">Transcription regulation</keyword>
<accession>P34326</accession>
<accession>P90748</accession>
<accession>Q6DTF7</accession>
<feature type="chain" id="PRO_0000196091" description="Homeobox protein engrailed-like ceh-16">
    <location>
        <begin position="1"/>
        <end position="187"/>
    </location>
</feature>
<feature type="DNA-binding region" description="Homeobox" evidence="1">
    <location>
        <begin position="87"/>
        <end position="146"/>
    </location>
</feature>
<feature type="region of interest" description="Disordered" evidence="2">
    <location>
        <begin position="14"/>
        <end position="43"/>
    </location>
</feature>
<feature type="region of interest" description="Disordered" evidence="2">
    <location>
        <begin position="60"/>
        <end position="100"/>
    </location>
</feature>
<feature type="region of interest" description="Disordered" evidence="2">
    <location>
        <begin position="144"/>
        <end position="167"/>
    </location>
</feature>
<feature type="compositionally biased region" description="Low complexity" evidence="2">
    <location>
        <begin position="20"/>
        <end position="39"/>
    </location>
</feature>
<feature type="compositionally biased region" description="Polar residues" evidence="2">
    <location>
        <begin position="145"/>
        <end position="163"/>
    </location>
</feature>
<feature type="mutagenesis site" description="In bp323; reduces DNA-binding. Impairs the self-renewal and expansion of seam cells at the L2 larval stage, which reduces the number of seam cells in adults. Defective division of the V5.p seam cell at the L2 larval stage resulting in daughter cells with an equal distribution of pop-1 and 65% of animals not having the PDE dopaminergic neuron." evidence="4">
    <original>T</original>
    <variation>N</variation>
    <location>
        <position position="95"/>
    </location>
</feature>